<name>Y101_STAAM</name>
<organism>
    <name type="scientific">Staphylococcus aureus (strain Mu50 / ATCC 700699)</name>
    <dbReference type="NCBI Taxonomy" id="158878"/>
    <lineage>
        <taxon>Bacteria</taxon>
        <taxon>Bacillati</taxon>
        <taxon>Bacillota</taxon>
        <taxon>Bacilli</taxon>
        <taxon>Bacillales</taxon>
        <taxon>Staphylococcaceae</taxon>
        <taxon>Staphylococcus</taxon>
    </lineage>
</organism>
<feature type="chain" id="PRO_0000194628" description="Uncharacterized HTH-type transcriptional regulator SAV0101">
    <location>
        <begin position="1"/>
        <end position="745"/>
    </location>
</feature>
<feature type="domain" description="HTH araC/xylS-type" evidence="1">
    <location>
        <begin position="158"/>
        <end position="256"/>
    </location>
</feature>
<feature type="DNA-binding region" description="H-T-H motif" evidence="1">
    <location>
        <begin position="175"/>
        <end position="196"/>
    </location>
</feature>
<feature type="DNA-binding region" description="H-T-H motif" evidence="1">
    <location>
        <begin position="223"/>
        <end position="246"/>
    </location>
</feature>
<evidence type="ECO:0000255" key="1">
    <source>
        <dbReference type="PROSITE-ProRule" id="PRU00593"/>
    </source>
</evidence>
<gene>
    <name type="ordered locus">SAV0101</name>
</gene>
<sequence length="745" mass="87878">MQRDYLIRVETESMPDFKRLNGLMIGFVIKGEAHIYDENNMTQCNSGDIFIINHRDLYRFQLQQDGIICYIQFQMKYLADKFDDAHCLYFHLTDATTTKNIHQLRNIMARLVSTHIRHNELSKLTEQQLVIQLLMHMIHYVPRTYHSNQSILNDDKVNQVCDYIELHFHEDLSLSELSEYVGWSESHLSKKFTESLGVGFQHFLNTTRIEHAKLDLTYTDETITDIALQNGFSSAASFARTFKHFTHQTPKQYRGDRPAITENQQSAQHNYHDRELILLLNDYIEEMNHFIEDIEKMNYKEIAFKPTNQQLNQFNHIIQVGYLRNLLNTQYQSQLLTCHHDFQVNEVLAYDVMPYIMKKLNAPFTYDAEISNIFYDIDLCLDFLLDHNFSLTMHLNQYDSRDYIDAFKVFIHHVALHVSHRKDLKFNLYVTTLHTSLIEMIDYFKALFPNGGLYIHLDQATERHLPLLKRLEPHINHFVFDANSNDAVDFNKMNDDEFKTASQMIINKTNYLIDLMHRHNLKRPLILLNWNTLTGDTFITNGEYFRGGIIIEQLLKLSTKVEGIGYWLNYDLHVSHCRNERDYMNSIELFHQYNGKRPVYFTALLFNKLTSNILYSDDTCIVTGTDSNFQILLYDAKHFNPYLALDNQMNMRATEMIHLNINALEDGMYKIKHFTLDKENGALFNLWRKHHTIHGMDKDSIDYVNRMSFPKLEVYDIDITDTLALNIKMITNGIHLIEVKRYPSS</sequence>
<proteinExistence type="predicted"/>
<protein>
    <recommendedName>
        <fullName>Uncharacterized HTH-type transcriptional regulator SAV0101</fullName>
    </recommendedName>
</protein>
<accession>Q99XB1</accession>
<reference key="1">
    <citation type="journal article" date="2001" name="Lancet">
        <title>Whole genome sequencing of meticillin-resistant Staphylococcus aureus.</title>
        <authorList>
            <person name="Kuroda M."/>
            <person name="Ohta T."/>
            <person name="Uchiyama I."/>
            <person name="Baba T."/>
            <person name="Yuzawa H."/>
            <person name="Kobayashi I."/>
            <person name="Cui L."/>
            <person name="Oguchi A."/>
            <person name="Aoki K."/>
            <person name="Nagai Y."/>
            <person name="Lian J.-Q."/>
            <person name="Ito T."/>
            <person name="Kanamori M."/>
            <person name="Matsumaru H."/>
            <person name="Maruyama A."/>
            <person name="Murakami H."/>
            <person name="Hosoyama A."/>
            <person name="Mizutani-Ui Y."/>
            <person name="Takahashi N.K."/>
            <person name="Sawano T."/>
            <person name="Inoue R."/>
            <person name="Kaito C."/>
            <person name="Sekimizu K."/>
            <person name="Hirakawa H."/>
            <person name="Kuhara S."/>
            <person name="Goto S."/>
            <person name="Yabuzaki J."/>
            <person name="Kanehisa M."/>
            <person name="Yamashita A."/>
            <person name="Oshima K."/>
            <person name="Furuya K."/>
            <person name="Yoshino C."/>
            <person name="Shiba T."/>
            <person name="Hattori M."/>
            <person name="Ogasawara N."/>
            <person name="Hayashi H."/>
            <person name="Hiramatsu K."/>
        </authorList>
    </citation>
    <scope>NUCLEOTIDE SEQUENCE [LARGE SCALE GENOMIC DNA]</scope>
    <source>
        <strain>Mu50 / ATCC 700699</strain>
    </source>
</reference>
<keyword id="KW-0238">DNA-binding</keyword>
<keyword id="KW-0677">Repeat</keyword>
<keyword id="KW-0804">Transcription</keyword>
<keyword id="KW-0805">Transcription regulation</keyword>
<dbReference type="EMBL" id="BA000017">
    <property type="protein sequence ID" value="BAB56263.1"/>
    <property type="molecule type" value="Genomic_DNA"/>
</dbReference>
<dbReference type="SMR" id="Q99XB1"/>
<dbReference type="KEGG" id="sav:SAV0101"/>
<dbReference type="HOGENOM" id="CLU_017624_1_0_9"/>
<dbReference type="PhylomeDB" id="Q99XB1"/>
<dbReference type="Proteomes" id="UP000002481">
    <property type="component" value="Chromosome"/>
</dbReference>
<dbReference type="GO" id="GO:0003700">
    <property type="term" value="F:DNA-binding transcription factor activity"/>
    <property type="evidence" value="ECO:0007669"/>
    <property type="project" value="InterPro"/>
</dbReference>
<dbReference type="GO" id="GO:0043565">
    <property type="term" value="F:sequence-specific DNA binding"/>
    <property type="evidence" value="ECO:0007669"/>
    <property type="project" value="InterPro"/>
</dbReference>
<dbReference type="Gene3D" id="3.20.20.80">
    <property type="entry name" value="Glycosidases"/>
    <property type="match status" value="1"/>
</dbReference>
<dbReference type="Gene3D" id="2.60.40.1500">
    <property type="entry name" value="Glycosyl hydrolase domain, family 39"/>
    <property type="match status" value="1"/>
</dbReference>
<dbReference type="Gene3D" id="1.10.10.60">
    <property type="entry name" value="Homeodomain-like"/>
    <property type="match status" value="2"/>
</dbReference>
<dbReference type="InterPro" id="IPR017853">
    <property type="entry name" value="Glycoside_hydrolase_SF"/>
</dbReference>
<dbReference type="InterPro" id="IPR009057">
    <property type="entry name" value="Homeodomain-like_sf"/>
</dbReference>
<dbReference type="InterPro" id="IPR037923">
    <property type="entry name" value="HTH-like"/>
</dbReference>
<dbReference type="InterPro" id="IPR018060">
    <property type="entry name" value="HTH_AraC"/>
</dbReference>
<dbReference type="InterPro" id="IPR020449">
    <property type="entry name" value="Tscrpt_reg_AraC-type_HTH"/>
</dbReference>
<dbReference type="NCBIfam" id="NF047455">
    <property type="entry name" value="TF_Staph_AryK"/>
    <property type="match status" value="1"/>
</dbReference>
<dbReference type="PANTHER" id="PTHR43280">
    <property type="entry name" value="ARAC-FAMILY TRANSCRIPTIONAL REGULATOR"/>
    <property type="match status" value="1"/>
</dbReference>
<dbReference type="PANTHER" id="PTHR43280:SF28">
    <property type="entry name" value="HTH-TYPE TRANSCRIPTIONAL ACTIVATOR RHAS"/>
    <property type="match status" value="1"/>
</dbReference>
<dbReference type="Pfam" id="PF12833">
    <property type="entry name" value="HTH_18"/>
    <property type="match status" value="1"/>
</dbReference>
<dbReference type="PRINTS" id="PR00032">
    <property type="entry name" value="HTHARAC"/>
</dbReference>
<dbReference type="SMART" id="SM00342">
    <property type="entry name" value="HTH_ARAC"/>
    <property type="match status" value="1"/>
</dbReference>
<dbReference type="SUPFAM" id="SSF51445">
    <property type="entry name" value="(Trans)glycosidases"/>
    <property type="match status" value="1"/>
</dbReference>
<dbReference type="SUPFAM" id="SSF51011">
    <property type="entry name" value="Glycosyl hydrolase domain"/>
    <property type="match status" value="1"/>
</dbReference>
<dbReference type="SUPFAM" id="SSF46689">
    <property type="entry name" value="Homeodomain-like"/>
    <property type="match status" value="2"/>
</dbReference>
<dbReference type="SUPFAM" id="SSF51215">
    <property type="entry name" value="Regulatory protein AraC"/>
    <property type="match status" value="1"/>
</dbReference>
<dbReference type="PROSITE" id="PS01124">
    <property type="entry name" value="HTH_ARAC_FAMILY_2"/>
    <property type="match status" value="1"/>
</dbReference>